<organism>
    <name type="scientific">Mus musculus</name>
    <name type="common">Mouse</name>
    <dbReference type="NCBI Taxonomy" id="10090"/>
    <lineage>
        <taxon>Eukaryota</taxon>
        <taxon>Metazoa</taxon>
        <taxon>Chordata</taxon>
        <taxon>Craniata</taxon>
        <taxon>Vertebrata</taxon>
        <taxon>Euteleostomi</taxon>
        <taxon>Mammalia</taxon>
        <taxon>Eutheria</taxon>
        <taxon>Euarchontoglires</taxon>
        <taxon>Glires</taxon>
        <taxon>Rodentia</taxon>
        <taxon>Myomorpha</taxon>
        <taxon>Muroidea</taxon>
        <taxon>Muridae</taxon>
        <taxon>Murinae</taxon>
        <taxon>Mus</taxon>
        <taxon>Mus</taxon>
    </lineage>
</organism>
<accession>P83870</accession>
<accession>Q3TQX7</accession>
<accession>Q9UH06</accession>
<evidence type="ECO:0000250" key="1">
    <source>
        <dbReference type="UniProtKB" id="P83871"/>
    </source>
</evidence>
<evidence type="ECO:0000250" key="2">
    <source>
        <dbReference type="UniProtKB" id="Q7RTV0"/>
    </source>
</evidence>
<evidence type="ECO:0000269" key="3">
    <source>
    </source>
</evidence>
<evidence type="ECO:0000269" key="4">
    <source>
    </source>
</evidence>
<evidence type="ECO:0000269" key="5">
    <source>
    </source>
</evidence>
<evidence type="ECO:0000305" key="6"/>
<evidence type="ECO:0007744" key="7">
    <source>
    </source>
</evidence>
<name>PHF5A_MOUSE</name>
<gene>
    <name type="primary">Phf5a</name>
</gene>
<comment type="function">
    <text evidence="1 2 5">Component of the 17S U2 SnRNP complex of the spliceosome, a large ribonucleoprotein complex that removes introns from transcribed pre-mRNAs (By similarity). The 17S U2 SnRNP complex (1) directly participates in early spliceosome assembly and (2) mediates recognition of the intron branch site during pre-mRNA splicing by promoting the selection of the pre-mRNA branch-site adenosine, the nucleophile for the first step of splicing (By similarity). Within the 17S U2 SnRNP complex, PHF5A is part of the SF3B subcomplex, which is required for 'A' complex assembly formed by the stable binding of U2 snRNP to the branchpoint sequence in pre-mRNA (By similarity). Sequence independent binding of SF3A and SF3B subcomplexes upstream of the branch site is essential, it may anchor U2 snRNP to the pre-mRNA (By similarity). Also acts as a component of the minor spliceosome, which is involved in the splicing of U12-type introns in pre-mRNAs (By similarity). Also involved in elongation by RNA polymerase II as part of the PAF1 complex (PAF1C) (PubMed:27749823). PAF1C is required for maintenance of embryonic stem cell (ESC) self-renewal and cellular reprogramming of stem cells (PubMed:27749823). Maintains pluripotency by recruiting and stabilizing PAF1C on pluripotency genes loci, and by regulating the expression of the pluripotency genes (PubMed:27749823). Regulates the deposition of elongation-associated histone modifications, including dimethylated histone H3 'Lys-79' (H3K79me2) and trimethylated histone H3 'Lys-36' (H3K36me3), on PAF1C targets, self-renewal and pluripotency genes (PubMed:27749823). Regulates RNA polymerase II promoter-proximal pause release of the PAF1C targets and self-renewal genes, and the levels of elongating ('Ser-2' phosphorylated) RNA polymerase II in their gene bodies (PubMed:27749823). Regulates muscle specification in adult stem cells by stabilizing PAF1C in chromatin to promote myogenic differentiation (PubMed:27749823). Acts as a transcriptional regulator by binding to the GJA1/Cx43 promoter and enhancing its up-regulation by ESR1/ER-alpha (By similarity).</text>
</comment>
<comment type="subunit">
    <text evidence="2 4 5">Component of the 17S U2 SnRNP complex, a ribonucleoprotein complex that contains small nuclear RNA (snRNA) U2 and a number of specific proteins (By similarity). Part of the SF3B subcomplex of the 17S U2 SnRNP complex (By similarity). SF3B associates with the splicing subcomplex SF3A and a 12S RNA unit to form the U2 small nuclear ribonucleoproteins complex (U2 snRNP). Within the SF3B complex interacts directly with SF3B1 and SF3B3 (By similarity). Component of the minor spliceosome, which splices U12-type introns. Within this complex, interacts with CRIPT (By similarity). Interacts (via N-terminus) with U2AF1 and SRSF5; acts to bridge the two (PubMed:18758164). Interacts (via C-terminus) with EP400 and DDX1; acts to bridge the two (PubMed:18758164). Interacts with the PAF1 complex (PAF1C) composed of CDC73, PAF1, LEO1, CTR9, RTF1 and SKIC8 (PubMed:27749823). Within the PAF1C interacts directly with CDC73 and SKIC8 (PubMed:27749823). Interacts with RNA polymerase II (PubMed:27749823).</text>
</comment>
<comment type="subcellular location">
    <subcellularLocation>
        <location evidence="3 4 5">Nucleus</location>
    </subcellularLocation>
    <subcellularLocation>
        <location evidence="4">Nucleus speckle</location>
    </subcellularLocation>
</comment>
<comment type="tissue specificity">
    <text evidence="3 4 5">Expressed in primary spermatocytes (at protein level) (PubMed:18758164). Ubiquitously expressed in pre- and postnatal tissues (PubMed:12054543). Highly expressed in pluripotent embryonic stem cells (ESCs) (at protein level) and induced pluripotent stem cells (iPSCs) (PubMed:27749823).</text>
</comment>
<comment type="induction">
    <text evidence="5">Expression levels are down-regulated following differentiation in embryonic stem cells (ESCs) and in differentiated mouse embryonic fibroblasts (MEFs).</text>
</comment>
<comment type="similarity">
    <text evidence="6">Belongs to the PHF5 family.</text>
</comment>
<sequence length="110" mass="12405">MAKHHPDLIFCRKQAGVAIGRLCEKCDGKCVICDSYVRPCTLVRICDECNYGSYQGRCVICGGPGVSDAYYCKECTIQEKDRDGCPKIVNLGSSKTDLFYERKKYGFKKR</sequence>
<proteinExistence type="evidence at protein level"/>
<dbReference type="EMBL" id="AF479286">
    <property type="protein sequence ID" value="AAM49735.1"/>
    <property type="molecule type" value="Genomic_DNA"/>
</dbReference>
<dbReference type="EMBL" id="AF479288">
    <property type="protein sequence ID" value="AAM49736.1"/>
    <property type="molecule type" value="mRNA"/>
</dbReference>
<dbReference type="EMBL" id="AK003520">
    <property type="protein sequence ID" value="BAB22833.1"/>
    <property type="molecule type" value="mRNA"/>
</dbReference>
<dbReference type="EMBL" id="AK143590">
    <property type="protein sequence ID" value="BAE25453.1"/>
    <property type="molecule type" value="mRNA"/>
</dbReference>
<dbReference type="EMBL" id="AK163247">
    <property type="protein sequence ID" value="BAE37255.1"/>
    <property type="molecule type" value="mRNA"/>
</dbReference>
<dbReference type="EMBL" id="AK167932">
    <property type="protein sequence ID" value="BAE39936.1"/>
    <property type="molecule type" value="mRNA"/>
</dbReference>
<dbReference type="EMBL" id="AK167955">
    <property type="protein sequence ID" value="BAE39955.1"/>
    <property type="molecule type" value="mRNA"/>
</dbReference>
<dbReference type="EMBL" id="BC025161">
    <property type="protein sequence ID" value="AAH25161.1"/>
    <property type="molecule type" value="mRNA"/>
</dbReference>
<dbReference type="CCDS" id="CCDS27674.1"/>
<dbReference type="PIR" id="JC7851">
    <property type="entry name" value="JC7851"/>
</dbReference>
<dbReference type="RefSeq" id="NP_081013.1">
    <property type="nucleotide sequence ID" value="NM_026737.3"/>
</dbReference>
<dbReference type="SMR" id="P83870"/>
<dbReference type="BioGRID" id="212875">
    <property type="interactions" value="10"/>
</dbReference>
<dbReference type="FunCoup" id="P83870">
    <property type="interactions" value="3518"/>
</dbReference>
<dbReference type="IntAct" id="P83870">
    <property type="interactions" value="2"/>
</dbReference>
<dbReference type="MINT" id="P83870"/>
<dbReference type="STRING" id="10090.ENSMUSP00000023117"/>
<dbReference type="iPTMnet" id="P83870"/>
<dbReference type="PhosphoSitePlus" id="P83870"/>
<dbReference type="SwissPalm" id="P83870"/>
<dbReference type="PaxDb" id="10090-ENSMUSP00000023117"/>
<dbReference type="PeptideAtlas" id="P83870"/>
<dbReference type="ProteomicsDB" id="287927"/>
<dbReference type="Pumba" id="P83870"/>
<dbReference type="Antibodypedia" id="26931">
    <property type="antibodies" value="195 antibodies from 23 providers"/>
</dbReference>
<dbReference type="DNASU" id="68479"/>
<dbReference type="Ensembl" id="ENSMUST00000023117.10">
    <property type="protein sequence ID" value="ENSMUSP00000023117.9"/>
    <property type="gene ID" value="ENSMUSG00000061360.9"/>
</dbReference>
<dbReference type="GeneID" id="68479"/>
<dbReference type="KEGG" id="mmu:68479"/>
<dbReference type="UCSC" id="uc007wxo.1">
    <property type="organism name" value="mouse"/>
</dbReference>
<dbReference type="AGR" id="MGI:2156864"/>
<dbReference type="CTD" id="84844"/>
<dbReference type="MGI" id="MGI:2156864">
    <property type="gene designation" value="Phf5a"/>
</dbReference>
<dbReference type="VEuPathDB" id="HostDB:ENSMUSG00000061360"/>
<dbReference type="eggNOG" id="KOG1705">
    <property type="taxonomic scope" value="Eukaryota"/>
</dbReference>
<dbReference type="GeneTree" id="ENSGT00390000018518"/>
<dbReference type="HOGENOM" id="CLU_110369_2_0_1"/>
<dbReference type="InParanoid" id="P83870"/>
<dbReference type="OMA" id="AYYCWEC"/>
<dbReference type="OrthoDB" id="10248186at2759"/>
<dbReference type="PhylomeDB" id="P83870"/>
<dbReference type="TreeFam" id="TF105627"/>
<dbReference type="Reactome" id="R-MMU-72163">
    <property type="pathway name" value="mRNA Splicing - Major Pathway"/>
</dbReference>
<dbReference type="BioGRID-ORCS" id="68479">
    <property type="hits" value="22 hits in 75 CRISPR screens"/>
</dbReference>
<dbReference type="ChiTaRS" id="Phf5a">
    <property type="organism name" value="mouse"/>
</dbReference>
<dbReference type="PRO" id="PR:P83870"/>
<dbReference type="Proteomes" id="UP000000589">
    <property type="component" value="Chromosome 15"/>
</dbReference>
<dbReference type="RNAct" id="P83870">
    <property type="molecule type" value="protein"/>
</dbReference>
<dbReference type="Bgee" id="ENSMUSG00000061360">
    <property type="expression patterns" value="Expressed in primitive streak and 275 other cell types or tissues"/>
</dbReference>
<dbReference type="GO" id="GO:0016363">
    <property type="term" value="C:nuclear matrix"/>
    <property type="evidence" value="ECO:0000314"/>
    <property type="project" value="MGI"/>
</dbReference>
<dbReference type="GO" id="GO:0016607">
    <property type="term" value="C:nuclear speck"/>
    <property type="evidence" value="ECO:0000314"/>
    <property type="project" value="UniProtKB"/>
</dbReference>
<dbReference type="GO" id="GO:0005634">
    <property type="term" value="C:nucleus"/>
    <property type="evidence" value="ECO:0000314"/>
    <property type="project" value="UniProtKB"/>
</dbReference>
<dbReference type="GO" id="GO:0005689">
    <property type="term" value="C:U12-type spliceosomal complex"/>
    <property type="evidence" value="ECO:0007669"/>
    <property type="project" value="Ensembl"/>
</dbReference>
<dbReference type="GO" id="GO:0005686">
    <property type="term" value="C:U2 snRNP"/>
    <property type="evidence" value="ECO:0000250"/>
    <property type="project" value="UniProtKB"/>
</dbReference>
<dbReference type="GO" id="GO:0071005">
    <property type="term" value="C:U2-type precatalytic spliceosome"/>
    <property type="evidence" value="ECO:0007669"/>
    <property type="project" value="Ensembl"/>
</dbReference>
<dbReference type="GO" id="GO:0003677">
    <property type="term" value="F:DNA binding"/>
    <property type="evidence" value="ECO:0007669"/>
    <property type="project" value="UniProtKB-KW"/>
</dbReference>
<dbReference type="GO" id="GO:0003723">
    <property type="term" value="F:RNA binding"/>
    <property type="evidence" value="ECO:0007669"/>
    <property type="project" value="UniProtKB-KW"/>
</dbReference>
<dbReference type="GO" id="GO:0008270">
    <property type="term" value="F:zinc ion binding"/>
    <property type="evidence" value="ECO:0007669"/>
    <property type="project" value="Ensembl"/>
</dbReference>
<dbReference type="GO" id="GO:0000398">
    <property type="term" value="P:mRNA splicing, via spliceosome"/>
    <property type="evidence" value="ECO:0000250"/>
    <property type="project" value="UniProtKB"/>
</dbReference>
<dbReference type="GO" id="GO:0045893">
    <property type="term" value="P:positive regulation of DNA-templated transcription"/>
    <property type="evidence" value="ECO:0000250"/>
    <property type="project" value="UniProtKB"/>
</dbReference>
<dbReference type="GO" id="GO:0048863">
    <property type="term" value="P:stem cell differentiation"/>
    <property type="evidence" value="ECO:0000270"/>
    <property type="project" value="UniProtKB"/>
</dbReference>
<dbReference type="InterPro" id="IPR005345">
    <property type="entry name" value="PHF5"/>
</dbReference>
<dbReference type="PANTHER" id="PTHR13120">
    <property type="entry name" value="PHD FINGER-LIKE DOMAIN-CONTAINING PROTEIN 5A"/>
    <property type="match status" value="1"/>
</dbReference>
<dbReference type="Pfam" id="PF03660">
    <property type="entry name" value="PHF5"/>
    <property type="match status" value="1"/>
</dbReference>
<dbReference type="PIRSF" id="PIRSF016468">
    <property type="entry name" value="PHF5"/>
    <property type="match status" value="1"/>
</dbReference>
<feature type="initiator methionine" description="Removed" evidence="7">
    <location>
        <position position="1"/>
    </location>
</feature>
<feature type="chain" id="PRO_0000218717" description="PHD finger-like domain-containing protein 5A">
    <location>
        <begin position="2"/>
        <end position="110"/>
    </location>
</feature>
<feature type="region of interest" description="Interaction with SF3B1 and SF3B3" evidence="2">
    <location>
        <begin position="35"/>
        <end position="51"/>
    </location>
</feature>
<feature type="region of interest" description="Interaction with SF3B3" evidence="2">
    <location>
        <begin position="79"/>
        <end position="82"/>
    </location>
</feature>
<feature type="binding site" evidence="2">
    <location>
        <position position="11"/>
    </location>
    <ligand>
        <name>Zn(2+)</name>
        <dbReference type="ChEBI" id="CHEBI:29105"/>
        <label>1</label>
    </ligand>
</feature>
<feature type="binding site" evidence="2">
    <location>
        <position position="23"/>
    </location>
    <ligand>
        <name>Zn(2+)</name>
        <dbReference type="ChEBI" id="CHEBI:29105"/>
        <label>2</label>
    </ligand>
</feature>
<feature type="binding site" evidence="2">
    <location>
        <position position="26"/>
    </location>
    <ligand>
        <name>Zn(2+)</name>
        <dbReference type="ChEBI" id="CHEBI:29105"/>
        <label>2</label>
    </ligand>
</feature>
<feature type="binding site" evidence="2">
    <location>
        <position position="30"/>
    </location>
    <ligand>
        <name>Zn(2+)</name>
        <dbReference type="ChEBI" id="CHEBI:29105"/>
        <label>3</label>
    </ligand>
</feature>
<feature type="binding site" evidence="2">
    <location>
        <position position="33"/>
    </location>
    <ligand>
        <name>Zn(2+)</name>
        <dbReference type="ChEBI" id="CHEBI:29105"/>
        <label>3</label>
    </ligand>
</feature>
<feature type="binding site" evidence="2">
    <location>
        <position position="46"/>
    </location>
    <ligand>
        <name>Zn(2+)</name>
        <dbReference type="ChEBI" id="CHEBI:29105"/>
        <label>1</label>
    </ligand>
</feature>
<feature type="binding site" evidence="2">
    <location>
        <position position="49"/>
    </location>
    <ligand>
        <name>Zn(2+)</name>
        <dbReference type="ChEBI" id="CHEBI:29105"/>
        <label>1</label>
    </ligand>
</feature>
<feature type="binding site" evidence="2">
    <location>
        <position position="58"/>
    </location>
    <ligand>
        <name>Zn(2+)</name>
        <dbReference type="ChEBI" id="CHEBI:29105"/>
        <label>2</label>
    </ligand>
</feature>
<feature type="binding site" evidence="2">
    <location>
        <position position="61"/>
    </location>
    <ligand>
        <name>Zn(2+)</name>
        <dbReference type="ChEBI" id="CHEBI:29105"/>
        <label>2</label>
    </ligand>
</feature>
<feature type="binding site" evidence="2">
    <location>
        <position position="72"/>
    </location>
    <ligand>
        <name>Zn(2+)</name>
        <dbReference type="ChEBI" id="CHEBI:29105"/>
        <label>3</label>
    </ligand>
</feature>
<feature type="binding site" evidence="2">
    <location>
        <position position="75"/>
    </location>
    <ligand>
        <name>Zn(2+)</name>
        <dbReference type="ChEBI" id="CHEBI:29105"/>
        <label>3</label>
    </ligand>
</feature>
<feature type="binding site" evidence="2">
    <location>
        <position position="85"/>
    </location>
    <ligand>
        <name>Zn(2+)</name>
        <dbReference type="ChEBI" id="CHEBI:29105"/>
        <label>1</label>
    </ligand>
</feature>
<feature type="site" description="Interaction with SF3B3" evidence="2">
    <location>
        <position position="17"/>
    </location>
</feature>
<feature type="site" description="Interaction with RNA" evidence="2">
    <location>
        <position position="100"/>
    </location>
</feature>
<feature type="modified residue" description="N-acetylalanine" evidence="7">
    <location>
        <position position="2"/>
    </location>
</feature>
<feature type="modified residue" description="N6-acetyllysine" evidence="7">
    <location>
        <position position="3"/>
    </location>
</feature>
<feature type="modified residue" description="Phosphoserine" evidence="2">
    <location>
        <position position="94"/>
    </location>
</feature>
<reference key="1">
    <citation type="journal article" date="2002" name="Biochem. Biophys. Res. Commun.">
        <title>Identification and characterization of a novel murine multigene family containing a PHD-finger-like motif.</title>
        <authorList>
            <person name="Trappe R."/>
            <person name="Ahmed M."/>
            <person name="Glaeser B."/>
            <person name="Vogel C."/>
            <person name="Tascou S."/>
            <person name="Burfeind P."/>
            <person name="Engel W."/>
        </authorList>
    </citation>
    <scope>NUCLEOTIDE SEQUENCE [GENOMIC DNA / MRNA]</scope>
    <scope>SUBCELLULAR LOCATION</scope>
    <scope>TISSUE SPECIFICITY</scope>
</reference>
<reference key="2">
    <citation type="journal article" date="2005" name="Science">
        <title>The transcriptional landscape of the mammalian genome.</title>
        <authorList>
            <person name="Carninci P."/>
            <person name="Kasukawa T."/>
            <person name="Katayama S."/>
            <person name="Gough J."/>
            <person name="Frith M.C."/>
            <person name="Maeda N."/>
            <person name="Oyama R."/>
            <person name="Ravasi T."/>
            <person name="Lenhard B."/>
            <person name="Wells C."/>
            <person name="Kodzius R."/>
            <person name="Shimokawa K."/>
            <person name="Bajic V.B."/>
            <person name="Brenner S.E."/>
            <person name="Batalov S."/>
            <person name="Forrest A.R."/>
            <person name="Zavolan M."/>
            <person name="Davis M.J."/>
            <person name="Wilming L.G."/>
            <person name="Aidinis V."/>
            <person name="Allen J.E."/>
            <person name="Ambesi-Impiombato A."/>
            <person name="Apweiler R."/>
            <person name="Aturaliya R.N."/>
            <person name="Bailey T.L."/>
            <person name="Bansal M."/>
            <person name="Baxter L."/>
            <person name="Beisel K.W."/>
            <person name="Bersano T."/>
            <person name="Bono H."/>
            <person name="Chalk A.M."/>
            <person name="Chiu K.P."/>
            <person name="Choudhary V."/>
            <person name="Christoffels A."/>
            <person name="Clutterbuck D.R."/>
            <person name="Crowe M.L."/>
            <person name="Dalla E."/>
            <person name="Dalrymple B.P."/>
            <person name="de Bono B."/>
            <person name="Della Gatta G."/>
            <person name="di Bernardo D."/>
            <person name="Down T."/>
            <person name="Engstrom P."/>
            <person name="Fagiolini M."/>
            <person name="Faulkner G."/>
            <person name="Fletcher C.F."/>
            <person name="Fukushima T."/>
            <person name="Furuno M."/>
            <person name="Futaki S."/>
            <person name="Gariboldi M."/>
            <person name="Georgii-Hemming P."/>
            <person name="Gingeras T.R."/>
            <person name="Gojobori T."/>
            <person name="Green R.E."/>
            <person name="Gustincich S."/>
            <person name="Harbers M."/>
            <person name="Hayashi Y."/>
            <person name="Hensch T.K."/>
            <person name="Hirokawa N."/>
            <person name="Hill D."/>
            <person name="Huminiecki L."/>
            <person name="Iacono M."/>
            <person name="Ikeo K."/>
            <person name="Iwama A."/>
            <person name="Ishikawa T."/>
            <person name="Jakt M."/>
            <person name="Kanapin A."/>
            <person name="Katoh M."/>
            <person name="Kawasawa Y."/>
            <person name="Kelso J."/>
            <person name="Kitamura H."/>
            <person name="Kitano H."/>
            <person name="Kollias G."/>
            <person name="Krishnan S.P."/>
            <person name="Kruger A."/>
            <person name="Kummerfeld S.K."/>
            <person name="Kurochkin I.V."/>
            <person name="Lareau L.F."/>
            <person name="Lazarevic D."/>
            <person name="Lipovich L."/>
            <person name="Liu J."/>
            <person name="Liuni S."/>
            <person name="McWilliam S."/>
            <person name="Madan Babu M."/>
            <person name="Madera M."/>
            <person name="Marchionni L."/>
            <person name="Matsuda H."/>
            <person name="Matsuzawa S."/>
            <person name="Miki H."/>
            <person name="Mignone F."/>
            <person name="Miyake S."/>
            <person name="Morris K."/>
            <person name="Mottagui-Tabar S."/>
            <person name="Mulder N."/>
            <person name="Nakano N."/>
            <person name="Nakauchi H."/>
            <person name="Ng P."/>
            <person name="Nilsson R."/>
            <person name="Nishiguchi S."/>
            <person name="Nishikawa S."/>
            <person name="Nori F."/>
            <person name="Ohara O."/>
            <person name="Okazaki Y."/>
            <person name="Orlando V."/>
            <person name="Pang K.C."/>
            <person name="Pavan W.J."/>
            <person name="Pavesi G."/>
            <person name="Pesole G."/>
            <person name="Petrovsky N."/>
            <person name="Piazza S."/>
            <person name="Reed J."/>
            <person name="Reid J.F."/>
            <person name="Ring B.Z."/>
            <person name="Ringwald M."/>
            <person name="Rost B."/>
            <person name="Ruan Y."/>
            <person name="Salzberg S.L."/>
            <person name="Sandelin A."/>
            <person name="Schneider C."/>
            <person name="Schoenbach C."/>
            <person name="Sekiguchi K."/>
            <person name="Semple C.A."/>
            <person name="Seno S."/>
            <person name="Sessa L."/>
            <person name="Sheng Y."/>
            <person name="Shibata Y."/>
            <person name="Shimada H."/>
            <person name="Shimada K."/>
            <person name="Silva D."/>
            <person name="Sinclair B."/>
            <person name="Sperling S."/>
            <person name="Stupka E."/>
            <person name="Sugiura K."/>
            <person name="Sultana R."/>
            <person name="Takenaka Y."/>
            <person name="Taki K."/>
            <person name="Tammoja K."/>
            <person name="Tan S.L."/>
            <person name="Tang S."/>
            <person name="Taylor M.S."/>
            <person name="Tegner J."/>
            <person name="Teichmann S.A."/>
            <person name="Ueda H.R."/>
            <person name="van Nimwegen E."/>
            <person name="Verardo R."/>
            <person name="Wei C.L."/>
            <person name="Yagi K."/>
            <person name="Yamanishi H."/>
            <person name="Zabarovsky E."/>
            <person name="Zhu S."/>
            <person name="Zimmer A."/>
            <person name="Hide W."/>
            <person name="Bult C."/>
            <person name="Grimmond S.M."/>
            <person name="Teasdale R.D."/>
            <person name="Liu E.T."/>
            <person name="Brusic V."/>
            <person name="Quackenbush J."/>
            <person name="Wahlestedt C."/>
            <person name="Mattick J.S."/>
            <person name="Hume D.A."/>
            <person name="Kai C."/>
            <person name="Sasaki D."/>
            <person name="Tomaru Y."/>
            <person name="Fukuda S."/>
            <person name="Kanamori-Katayama M."/>
            <person name="Suzuki M."/>
            <person name="Aoki J."/>
            <person name="Arakawa T."/>
            <person name="Iida J."/>
            <person name="Imamura K."/>
            <person name="Itoh M."/>
            <person name="Kato T."/>
            <person name="Kawaji H."/>
            <person name="Kawagashira N."/>
            <person name="Kawashima T."/>
            <person name="Kojima M."/>
            <person name="Kondo S."/>
            <person name="Konno H."/>
            <person name="Nakano K."/>
            <person name="Ninomiya N."/>
            <person name="Nishio T."/>
            <person name="Okada M."/>
            <person name="Plessy C."/>
            <person name="Shibata K."/>
            <person name="Shiraki T."/>
            <person name="Suzuki S."/>
            <person name="Tagami M."/>
            <person name="Waki K."/>
            <person name="Watahiki A."/>
            <person name="Okamura-Oho Y."/>
            <person name="Suzuki H."/>
            <person name="Kawai J."/>
            <person name="Hayashizaki Y."/>
        </authorList>
    </citation>
    <scope>NUCLEOTIDE SEQUENCE [LARGE SCALE MRNA]</scope>
    <source>
        <strain>BALB/cJ</strain>
        <strain>C57BL/6J</strain>
        <strain>DBA/2J</strain>
        <tissue>Egg</tissue>
        <tissue>Spleen</tissue>
    </source>
</reference>
<reference key="3">
    <citation type="journal article" date="2004" name="Genome Res.">
        <title>The status, quality, and expansion of the NIH full-length cDNA project: the Mammalian Gene Collection (MGC).</title>
        <authorList>
            <consortium name="The MGC Project Team"/>
        </authorList>
    </citation>
    <scope>NUCLEOTIDE SEQUENCE [LARGE SCALE MRNA]</scope>
    <source>
        <strain>FVB/N</strain>
        <tissue>Kidney</tissue>
    </source>
</reference>
<reference key="4">
    <citation type="journal article" date="2008" name="Cytogenet. Genome Res.">
        <title>PHF5A represents a bridge protein between splicing proteins and ATP-dependent helicases and is differentially expressed during mouse spermatogenesis.</title>
        <authorList>
            <person name="Rzymski T."/>
            <person name="Grzmil P."/>
            <person name="Meinhardt A."/>
            <person name="Wolf S."/>
            <person name="Burfeind P."/>
        </authorList>
    </citation>
    <scope>INTERACTION WITH DDX1; EP400; SRSF5 AND U2AF1</scope>
    <scope>SUBCELLULAR LOCATION</scope>
    <scope>TISSUE SPECIFICITY</scope>
</reference>
<reference key="5">
    <citation type="journal article" date="2010" name="Cell">
        <title>A tissue-specific atlas of mouse protein phosphorylation and expression.</title>
        <authorList>
            <person name="Huttlin E.L."/>
            <person name="Jedrychowski M.P."/>
            <person name="Elias J.E."/>
            <person name="Goswami T."/>
            <person name="Rad R."/>
            <person name="Beausoleil S.A."/>
            <person name="Villen J."/>
            <person name="Haas W."/>
            <person name="Sowa M.E."/>
            <person name="Gygi S.P."/>
        </authorList>
    </citation>
    <scope>IDENTIFICATION BY MASS SPECTROMETRY [LARGE SCALE ANALYSIS]</scope>
    <source>
        <tissue>Brain</tissue>
        <tissue>Brown adipose tissue</tissue>
        <tissue>Kidney</tissue>
        <tissue>Liver</tissue>
        <tissue>Pancreas</tissue>
        <tissue>Spleen</tissue>
        <tissue>Testis</tissue>
    </source>
</reference>
<reference key="6">
    <citation type="journal article" date="2013" name="Mol. Cell">
        <title>SIRT5-mediated lysine desuccinylation impacts diverse metabolic pathways.</title>
        <authorList>
            <person name="Park J."/>
            <person name="Chen Y."/>
            <person name="Tishkoff D.X."/>
            <person name="Peng C."/>
            <person name="Tan M."/>
            <person name="Dai L."/>
            <person name="Xie Z."/>
            <person name="Zhang Y."/>
            <person name="Zwaans B.M."/>
            <person name="Skinner M.E."/>
            <person name="Lombard D.B."/>
            <person name="Zhao Y."/>
        </authorList>
    </citation>
    <scope>ACETYLATION [LARGE SCALE ANALYSIS] AT ALA-2 AND LYS-3</scope>
    <scope>CLEAVAGE OF INITIATOR METHIONINE [LARGE SCALE ANALYSIS]</scope>
    <scope>IDENTIFICATION BY MASS SPECTROMETRY [LARGE SCALE ANALYSIS]</scope>
    <source>
        <tissue>Embryonic fibroblast</tissue>
    </source>
</reference>
<reference key="7">
    <citation type="journal article" date="2016" name="Nat. Cell Biol.">
        <title>Regulation of transcriptional elongation in pluripotency and cell differentiation by the PHD-finger protein Phf5a.</title>
        <authorList>
            <person name="Strikoudis A."/>
            <person name="Lazaris C."/>
            <person name="Trimarchi T."/>
            <person name="Galvao Neto A.L."/>
            <person name="Yang Y."/>
            <person name="Ntziachristos P."/>
            <person name="Rothbart S."/>
            <person name="Buckley S."/>
            <person name="Dolgalev I."/>
            <person name="Stadtfeld M."/>
            <person name="Strahl B.D."/>
            <person name="Dynlacht B.D."/>
            <person name="Tsirigos A."/>
            <person name="Aifantis I."/>
        </authorList>
    </citation>
    <scope>FUNCTION</scope>
    <scope>INTERACTION WITH CDC73; SKIC8 AND RNA POLYMERASE II</scope>
    <scope>SUBUNIT</scope>
    <scope>SUBCELLULAR LOCATION</scope>
    <scope>TISSUE SPECIFICITY</scope>
    <scope>INDUCTION</scope>
</reference>
<protein>
    <recommendedName>
        <fullName>PHD finger-like domain-containing protein 5A</fullName>
        <shortName>PHD finger-like domain protein 5A</shortName>
    </recommendedName>
    <alternativeName>
        <fullName>Splicing factor 3B-associated 14 kDa protein</fullName>
        <shortName>SF3b14b</shortName>
    </alternativeName>
</protein>
<keyword id="KW-0007">Acetylation</keyword>
<keyword id="KW-0010">Activator</keyword>
<keyword id="KW-0238">DNA-binding</keyword>
<keyword id="KW-0479">Metal-binding</keyword>
<keyword id="KW-0507">mRNA processing</keyword>
<keyword id="KW-0508">mRNA splicing</keyword>
<keyword id="KW-0539">Nucleus</keyword>
<keyword id="KW-0597">Phosphoprotein</keyword>
<keyword id="KW-1185">Reference proteome</keyword>
<keyword id="KW-0694">RNA-binding</keyword>
<keyword id="KW-0747">Spliceosome</keyword>
<keyword id="KW-0804">Transcription</keyword>
<keyword id="KW-0805">Transcription regulation</keyword>
<keyword id="KW-0862">Zinc</keyword>